<reference key="1">
    <citation type="journal article" date="2005" name="Nature">
        <title>The genome of the social amoeba Dictyostelium discoideum.</title>
        <authorList>
            <person name="Eichinger L."/>
            <person name="Pachebat J.A."/>
            <person name="Gloeckner G."/>
            <person name="Rajandream M.A."/>
            <person name="Sucgang R."/>
            <person name="Berriman M."/>
            <person name="Song J."/>
            <person name="Olsen R."/>
            <person name="Szafranski K."/>
            <person name="Xu Q."/>
            <person name="Tunggal B."/>
            <person name="Kummerfeld S."/>
            <person name="Madera M."/>
            <person name="Konfortov B.A."/>
            <person name="Rivero F."/>
            <person name="Bankier A.T."/>
            <person name="Lehmann R."/>
            <person name="Hamlin N."/>
            <person name="Davies R."/>
            <person name="Gaudet P."/>
            <person name="Fey P."/>
            <person name="Pilcher K."/>
            <person name="Chen G."/>
            <person name="Saunders D."/>
            <person name="Sodergren E.J."/>
            <person name="Davis P."/>
            <person name="Kerhornou A."/>
            <person name="Nie X."/>
            <person name="Hall N."/>
            <person name="Anjard C."/>
            <person name="Hemphill L."/>
            <person name="Bason N."/>
            <person name="Farbrother P."/>
            <person name="Desany B."/>
            <person name="Just E."/>
            <person name="Morio T."/>
            <person name="Rost R."/>
            <person name="Churcher C.M."/>
            <person name="Cooper J."/>
            <person name="Haydock S."/>
            <person name="van Driessche N."/>
            <person name="Cronin A."/>
            <person name="Goodhead I."/>
            <person name="Muzny D.M."/>
            <person name="Mourier T."/>
            <person name="Pain A."/>
            <person name="Lu M."/>
            <person name="Harper D."/>
            <person name="Lindsay R."/>
            <person name="Hauser H."/>
            <person name="James K.D."/>
            <person name="Quiles M."/>
            <person name="Madan Babu M."/>
            <person name="Saito T."/>
            <person name="Buchrieser C."/>
            <person name="Wardroper A."/>
            <person name="Felder M."/>
            <person name="Thangavelu M."/>
            <person name="Johnson D."/>
            <person name="Knights A."/>
            <person name="Loulseged H."/>
            <person name="Mungall K.L."/>
            <person name="Oliver K."/>
            <person name="Price C."/>
            <person name="Quail M.A."/>
            <person name="Urushihara H."/>
            <person name="Hernandez J."/>
            <person name="Rabbinowitsch E."/>
            <person name="Steffen D."/>
            <person name="Sanders M."/>
            <person name="Ma J."/>
            <person name="Kohara Y."/>
            <person name="Sharp S."/>
            <person name="Simmonds M.N."/>
            <person name="Spiegler S."/>
            <person name="Tivey A."/>
            <person name="Sugano S."/>
            <person name="White B."/>
            <person name="Walker D."/>
            <person name="Woodward J.R."/>
            <person name="Winckler T."/>
            <person name="Tanaka Y."/>
            <person name="Shaulsky G."/>
            <person name="Schleicher M."/>
            <person name="Weinstock G.M."/>
            <person name="Rosenthal A."/>
            <person name="Cox E.C."/>
            <person name="Chisholm R.L."/>
            <person name="Gibbs R.A."/>
            <person name="Loomis W.F."/>
            <person name="Platzer M."/>
            <person name="Kay R.R."/>
            <person name="Williams J.G."/>
            <person name="Dear P.H."/>
            <person name="Noegel A.A."/>
            <person name="Barrell B.G."/>
            <person name="Kuspa A."/>
        </authorList>
    </citation>
    <scope>NUCLEOTIDE SEQUENCE [LARGE SCALE GENOMIC DNA]</scope>
    <source>
        <strain>AX4</strain>
    </source>
</reference>
<accession>Q54DM1</accession>
<organism>
    <name type="scientific">Dictyostelium discoideum</name>
    <name type="common">Social amoeba</name>
    <dbReference type="NCBI Taxonomy" id="44689"/>
    <lineage>
        <taxon>Eukaryota</taxon>
        <taxon>Amoebozoa</taxon>
        <taxon>Evosea</taxon>
        <taxon>Eumycetozoa</taxon>
        <taxon>Dictyostelia</taxon>
        <taxon>Dictyosteliales</taxon>
        <taxon>Dictyosteliaceae</taxon>
        <taxon>Dictyostelium</taxon>
    </lineage>
</organism>
<proteinExistence type="inferred from homology"/>
<dbReference type="EMBL" id="AAFI02000187">
    <property type="protein sequence ID" value="EAL61423.1"/>
    <property type="molecule type" value="Genomic_DNA"/>
</dbReference>
<dbReference type="RefSeq" id="XP_629851.1">
    <property type="nucleotide sequence ID" value="XM_629849.1"/>
</dbReference>
<dbReference type="SMR" id="Q54DM1"/>
<dbReference type="FunCoup" id="Q54DM1">
    <property type="interactions" value="803"/>
</dbReference>
<dbReference type="STRING" id="44689.Q54DM1"/>
<dbReference type="PaxDb" id="44689-DDB0233126"/>
<dbReference type="EnsemblProtists" id="EAL61423">
    <property type="protein sequence ID" value="EAL61423"/>
    <property type="gene ID" value="DDB_G0292134"/>
</dbReference>
<dbReference type="GeneID" id="8628531"/>
<dbReference type="KEGG" id="ddi:DDB_G0292134"/>
<dbReference type="dictyBase" id="DDB_G0292134">
    <property type="gene designation" value="bub3"/>
</dbReference>
<dbReference type="VEuPathDB" id="AmoebaDB:DDB_G0292134"/>
<dbReference type="eggNOG" id="KOG1036">
    <property type="taxonomic scope" value="Eukaryota"/>
</dbReference>
<dbReference type="HOGENOM" id="CLU_038526_0_0_1"/>
<dbReference type="InParanoid" id="Q54DM1"/>
<dbReference type="OMA" id="WDSTLHI"/>
<dbReference type="PhylomeDB" id="Q54DM1"/>
<dbReference type="Reactome" id="R-DDI-141430">
    <property type="pathway name" value="Inactivation of APC/C via direct inhibition of the APC/C complex"/>
</dbReference>
<dbReference type="Reactome" id="R-DDI-174184">
    <property type="pathway name" value="Cdc20:Phospho-APC/C mediated degradation of Cyclin A"/>
</dbReference>
<dbReference type="Reactome" id="R-DDI-176409">
    <property type="pathway name" value="APC/C:Cdc20 mediated degradation of mitotic proteins"/>
</dbReference>
<dbReference type="Reactome" id="R-DDI-179409">
    <property type="pathway name" value="APC-Cdc20 mediated degradation of Nek2A"/>
</dbReference>
<dbReference type="PRO" id="PR:Q54DM1"/>
<dbReference type="Proteomes" id="UP000002195">
    <property type="component" value="Chromosome 6"/>
</dbReference>
<dbReference type="GO" id="GO:1990298">
    <property type="term" value="C:bub1-bub3 complex"/>
    <property type="evidence" value="ECO:0000318"/>
    <property type="project" value="GO_Central"/>
</dbReference>
<dbReference type="GO" id="GO:0000776">
    <property type="term" value="C:kinetochore"/>
    <property type="evidence" value="ECO:0000250"/>
    <property type="project" value="UniProtKB"/>
</dbReference>
<dbReference type="GO" id="GO:0005654">
    <property type="term" value="C:nucleoplasm"/>
    <property type="evidence" value="ECO:0000318"/>
    <property type="project" value="GO_Central"/>
</dbReference>
<dbReference type="GO" id="GO:0043130">
    <property type="term" value="F:ubiquitin binding"/>
    <property type="evidence" value="ECO:0000318"/>
    <property type="project" value="GO_Central"/>
</dbReference>
<dbReference type="GO" id="GO:0051301">
    <property type="term" value="P:cell division"/>
    <property type="evidence" value="ECO:0007669"/>
    <property type="project" value="UniProtKB-KW"/>
</dbReference>
<dbReference type="GO" id="GO:0007094">
    <property type="term" value="P:mitotic spindle assembly checkpoint signaling"/>
    <property type="evidence" value="ECO:0000318"/>
    <property type="project" value="GO_Central"/>
</dbReference>
<dbReference type="FunFam" id="2.130.10.10:FF:002674">
    <property type="entry name" value="Mitotic checkpoint protein bub3"/>
    <property type="match status" value="1"/>
</dbReference>
<dbReference type="Gene3D" id="2.130.10.10">
    <property type="entry name" value="YVTN repeat-like/Quinoprotein amine dehydrogenase"/>
    <property type="match status" value="1"/>
</dbReference>
<dbReference type="InterPro" id="IPR015943">
    <property type="entry name" value="WD40/YVTN_repeat-like_dom_sf"/>
</dbReference>
<dbReference type="InterPro" id="IPR019775">
    <property type="entry name" value="WD40_repeat_CS"/>
</dbReference>
<dbReference type="InterPro" id="IPR036322">
    <property type="entry name" value="WD40_repeat_dom_sf"/>
</dbReference>
<dbReference type="InterPro" id="IPR001680">
    <property type="entry name" value="WD40_rpt"/>
</dbReference>
<dbReference type="PANTHER" id="PTHR10971">
    <property type="entry name" value="MRNA EXPORT FACTOR AND BUB3"/>
    <property type="match status" value="1"/>
</dbReference>
<dbReference type="Pfam" id="PF00400">
    <property type="entry name" value="WD40"/>
    <property type="match status" value="3"/>
</dbReference>
<dbReference type="SMART" id="SM00320">
    <property type="entry name" value="WD40"/>
    <property type="match status" value="6"/>
</dbReference>
<dbReference type="SUPFAM" id="SSF50978">
    <property type="entry name" value="WD40 repeat-like"/>
    <property type="match status" value="1"/>
</dbReference>
<dbReference type="PROSITE" id="PS00678">
    <property type="entry name" value="WD_REPEATS_1"/>
    <property type="match status" value="1"/>
</dbReference>
<dbReference type="PROSITE" id="PS50082">
    <property type="entry name" value="WD_REPEATS_2"/>
    <property type="match status" value="2"/>
</dbReference>
<dbReference type="PROSITE" id="PS50294">
    <property type="entry name" value="WD_REPEATS_REGION"/>
    <property type="match status" value="1"/>
</dbReference>
<protein>
    <recommendedName>
        <fullName>Mitotic checkpoint protein bub3</fullName>
    </recommendedName>
</protein>
<keyword id="KW-0131">Cell cycle</keyword>
<keyword id="KW-0132">Cell division</keyword>
<keyword id="KW-0498">Mitosis</keyword>
<keyword id="KW-0539">Nucleus</keyword>
<keyword id="KW-1185">Reference proteome</keyword>
<keyword id="KW-0677">Repeat</keyword>
<keyword id="KW-0853">WD repeat</keyword>
<feature type="chain" id="PRO_0000327588" description="Mitotic checkpoint protein bub3">
    <location>
        <begin position="1"/>
        <end position="331"/>
    </location>
</feature>
<feature type="repeat" description="WD 1">
    <location>
        <begin position="15"/>
        <end position="54"/>
    </location>
</feature>
<feature type="repeat" description="WD 2">
    <location>
        <begin position="56"/>
        <end position="94"/>
    </location>
</feature>
<feature type="repeat" description="WD 3">
    <location>
        <begin position="96"/>
        <end position="135"/>
    </location>
</feature>
<feature type="repeat" description="WD 4">
    <location>
        <begin position="138"/>
        <end position="177"/>
    </location>
</feature>
<feature type="repeat" description="WD 5">
    <location>
        <begin position="237"/>
        <end position="276"/>
    </location>
</feature>
<feature type="repeat" description="WD 6">
    <location>
        <begin position="279"/>
        <end position="327"/>
    </location>
</feature>
<name>BUB3_DICDI</name>
<sequence length="331" mass="37420">MSNEPTSSFYELRLPPSDGISSVNFCPNSVNLLVTSWDSTVRCYDTQNNVQKWQYNHKGPVMDGCFPEKNKVFSGDVFGSVKHYDPVAGVEKEVGSHEDGVRSVVYNSDTQQLFTGGWDQQLKLWDIRSDKMEISNHDLQSKIFTMDVSPISNMLVIGTADKYVTIYDTRQMETHLQKRESSIKYQTRCIRTFTDGKGYALASVEGRIAMEYFDPSPAVQSKKYAFKCHRLTESGVDVVYPVNCIAFNPHYGTFATGGCDKNVFFWDGANRKRLHALKTYPTSISSMSFNTDGNILAVASSYTFEEGEKDHPPDQIFIHNILSEKIIKPIK</sequence>
<comment type="function">
    <text evidence="1">Involved in cell cycle checkpoint enforcement.</text>
</comment>
<comment type="subcellular location">
    <subcellularLocation>
        <location evidence="1">Nucleus</location>
    </subcellularLocation>
</comment>
<comment type="similarity">
    <text evidence="2">Belongs to the WD repeat BUB3 family.</text>
</comment>
<evidence type="ECO:0000250" key="1"/>
<evidence type="ECO:0000305" key="2"/>
<gene>
    <name type="primary">bub3</name>
    <name type="ORF">DDB_G0292134</name>
</gene>